<dbReference type="EC" id="1.2.1.27" evidence="1"/>
<dbReference type="EMBL" id="CP001177">
    <property type="protein sequence ID" value="ACJ79682.1"/>
    <property type="molecule type" value="Genomic_DNA"/>
</dbReference>
<dbReference type="SMR" id="B7HR31"/>
<dbReference type="KEGG" id="bcr:BCAH187_A2455"/>
<dbReference type="HOGENOM" id="CLU_005391_1_10_9"/>
<dbReference type="UniPathway" id="UPA00076">
    <property type="reaction ID" value="UER00148"/>
</dbReference>
<dbReference type="Proteomes" id="UP000002214">
    <property type="component" value="Chromosome"/>
</dbReference>
<dbReference type="GO" id="GO:0018478">
    <property type="term" value="F:malonate-semialdehyde dehydrogenase (acetylating) activity"/>
    <property type="evidence" value="ECO:0007669"/>
    <property type="project" value="UniProtKB-UniRule"/>
</dbReference>
<dbReference type="GO" id="GO:0004491">
    <property type="term" value="F:methylmalonate-semialdehyde dehydrogenase (acylating, NAD) activity"/>
    <property type="evidence" value="ECO:0007669"/>
    <property type="project" value="UniProtKB-UniRule"/>
</dbReference>
<dbReference type="GO" id="GO:0019310">
    <property type="term" value="P:inositol catabolic process"/>
    <property type="evidence" value="ECO:0007669"/>
    <property type="project" value="UniProtKB-UniRule"/>
</dbReference>
<dbReference type="GO" id="GO:0006210">
    <property type="term" value="P:thymine catabolic process"/>
    <property type="evidence" value="ECO:0007669"/>
    <property type="project" value="TreeGrafter"/>
</dbReference>
<dbReference type="GO" id="GO:0006574">
    <property type="term" value="P:valine catabolic process"/>
    <property type="evidence" value="ECO:0007669"/>
    <property type="project" value="TreeGrafter"/>
</dbReference>
<dbReference type="CDD" id="cd07085">
    <property type="entry name" value="ALDH_F6_MMSDH"/>
    <property type="match status" value="1"/>
</dbReference>
<dbReference type="FunFam" id="3.40.309.10:FF:000002">
    <property type="entry name" value="Methylmalonate-semialdehyde dehydrogenase (Acylating)"/>
    <property type="match status" value="1"/>
</dbReference>
<dbReference type="FunFam" id="3.40.605.10:FF:000003">
    <property type="entry name" value="Methylmalonate-semialdehyde dehydrogenase [acylating]"/>
    <property type="match status" value="1"/>
</dbReference>
<dbReference type="Gene3D" id="3.40.605.10">
    <property type="entry name" value="Aldehyde Dehydrogenase, Chain A, domain 1"/>
    <property type="match status" value="1"/>
</dbReference>
<dbReference type="Gene3D" id="3.40.309.10">
    <property type="entry name" value="Aldehyde Dehydrogenase, Chain A, domain 2"/>
    <property type="match status" value="1"/>
</dbReference>
<dbReference type="HAMAP" id="MF_01670">
    <property type="entry name" value="IolA"/>
    <property type="match status" value="1"/>
</dbReference>
<dbReference type="InterPro" id="IPR016161">
    <property type="entry name" value="Ald_DH/histidinol_DH"/>
</dbReference>
<dbReference type="InterPro" id="IPR016163">
    <property type="entry name" value="Ald_DH_C"/>
</dbReference>
<dbReference type="InterPro" id="IPR016160">
    <property type="entry name" value="Ald_DH_CS_CYS"/>
</dbReference>
<dbReference type="InterPro" id="IPR016162">
    <property type="entry name" value="Ald_DH_N"/>
</dbReference>
<dbReference type="InterPro" id="IPR015590">
    <property type="entry name" value="Aldehyde_DH_dom"/>
</dbReference>
<dbReference type="InterPro" id="IPR010061">
    <property type="entry name" value="MeMal-semiAld_DH"/>
</dbReference>
<dbReference type="InterPro" id="IPR023510">
    <property type="entry name" value="MSDH_GmP_bac"/>
</dbReference>
<dbReference type="NCBIfam" id="TIGR01722">
    <property type="entry name" value="MMSDH"/>
    <property type="match status" value="1"/>
</dbReference>
<dbReference type="PANTHER" id="PTHR43866">
    <property type="entry name" value="MALONATE-SEMIALDEHYDE DEHYDROGENASE"/>
    <property type="match status" value="1"/>
</dbReference>
<dbReference type="PANTHER" id="PTHR43866:SF4">
    <property type="entry name" value="MALONATE-SEMIALDEHYDE DEHYDROGENASE"/>
    <property type="match status" value="1"/>
</dbReference>
<dbReference type="Pfam" id="PF00171">
    <property type="entry name" value="Aldedh"/>
    <property type="match status" value="1"/>
</dbReference>
<dbReference type="SUPFAM" id="SSF53720">
    <property type="entry name" value="ALDH-like"/>
    <property type="match status" value="1"/>
</dbReference>
<dbReference type="PROSITE" id="PS00070">
    <property type="entry name" value="ALDEHYDE_DEHYDR_CYS"/>
    <property type="match status" value="1"/>
</dbReference>
<feature type="chain" id="PRO_1000187313" description="Malonate-semialdehyde dehydrogenase">
    <location>
        <begin position="1"/>
        <end position="486"/>
    </location>
</feature>
<feature type="active site" description="Nucleophile" evidence="1">
    <location>
        <position position="286"/>
    </location>
</feature>
<feature type="binding site" evidence="1">
    <location>
        <position position="154"/>
    </location>
    <ligand>
        <name>NAD(+)</name>
        <dbReference type="ChEBI" id="CHEBI:57540"/>
    </ligand>
</feature>
<feature type="binding site" evidence="1">
    <location>
        <position position="178"/>
    </location>
    <ligand>
        <name>NAD(+)</name>
        <dbReference type="ChEBI" id="CHEBI:57540"/>
    </ligand>
</feature>
<feature type="binding site" evidence="1">
    <location>
        <position position="181"/>
    </location>
    <ligand>
        <name>NAD(+)</name>
        <dbReference type="ChEBI" id="CHEBI:57540"/>
    </ligand>
</feature>
<feature type="binding site" evidence="1">
    <location>
        <position position="182"/>
    </location>
    <ligand>
        <name>NAD(+)</name>
        <dbReference type="ChEBI" id="CHEBI:57540"/>
    </ligand>
</feature>
<feature type="binding site" evidence="1">
    <location>
        <position position="231"/>
    </location>
    <ligand>
        <name>NAD(+)</name>
        <dbReference type="ChEBI" id="CHEBI:57540"/>
    </ligand>
</feature>
<feature type="binding site" evidence="1">
    <location>
        <position position="386"/>
    </location>
    <ligand>
        <name>NAD(+)</name>
        <dbReference type="ChEBI" id="CHEBI:57540"/>
    </ligand>
</feature>
<gene>
    <name evidence="1" type="primary">iolA</name>
    <name type="ordered locus">BCAH187_A2455</name>
</gene>
<accession>B7HR31</accession>
<comment type="function">
    <text evidence="1">Catalyzes the oxidation of malonate semialdehyde (MSA) and methylmalonate semialdehyde (MMSA) into acetyl-CoA and propanoyl-CoA, respectively. Is involved in a myo-inositol catabolic pathway. Bicarbonate, and not CO2, is the end-product of the enzymatic reaction.</text>
</comment>
<comment type="catalytic activity">
    <reaction evidence="1">
        <text>3-oxopropanoate + NAD(+) + CoA + H2O = hydrogencarbonate + acetyl-CoA + NADH + H(+)</text>
        <dbReference type="Rhea" id="RHEA:76615"/>
        <dbReference type="ChEBI" id="CHEBI:15377"/>
        <dbReference type="ChEBI" id="CHEBI:15378"/>
        <dbReference type="ChEBI" id="CHEBI:17544"/>
        <dbReference type="ChEBI" id="CHEBI:33190"/>
        <dbReference type="ChEBI" id="CHEBI:57287"/>
        <dbReference type="ChEBI" id="CHEBI:57288"/>
        <dbReference type="ChEBI" id="CHEBI:57540"/>
        <dbReference type="ChEBI" id="CHEBI:57945"/>
        <dbReference type="EC" id="1.2.1.27"/>
    </reaction>
    <physiologicalReaction direction="left-to-right" evidence="1">
        <dbReference type="Rhea" id="RHEA:76616"/>
    </physiologicalReaction>
</comment>
<comment type="catalytic activity">
    <reaction evidence="1">
        <text>2-methyl-3-oxopropanoate + NAD(+) + CoA + H2O = propanoyl-CoA + hydrogencarbonate + NADH + H(+)</text>
        <dbReference type="Rhea" id="RHEA:20804"/>
        <dbReference type="ChEBI" id="CHEBI:15377"/>
        <dbReference type="ChEBI" id="CHEBI:15378"/>
        <dbReference type="ChEBI" id="CHEBI:17544"/>
        <dbReference type="ChEBI" id="CHEBI:57287"/>
        <dbReference type="ChEBI" id="CHEBI:57392"/>
        <dbReference type="ChEBI" id="CHEBI:57540"/>
        <dbReference type="ChEBI" id="CHEBI:57700"/>
        <dbReference type="ChEBI" id="CHEBI:57945"/>
        <dbReference type="EC" id="1.2.1.27"/>
    </reaction>
    <physiologicalReaction direction="left-to-right" evidence="1">
        <dbReference type="Rhea" id="RHEA:20805"/>
    </physiologicalReaction>
</comment>
<comment type="pathway">
    <text evidence="1">Polyol metabolism; myo-inositol degradation into acetyl-CoA; acetyl-CoA from myo-inositol: step 7/7.</text>
</comment>
<comment type="subunit">
    <text evidence="1">Homotetramer.</text>
</comment>
<comment type="similarity">
    <text evidence="1">Belongs to the aldehyde dehydrogenase family. IolA subfamily.</text>
</comment>
<name>IOLA_BACC7</name>
<proteinExistence type="inferred from homology"/>
<keyword id="KW-0520">NAD</keyword>
<keyword id="KW-0560">Oxidoreductase</keyword>
<organism>
    <name type="scientific">Bacillus cereus (strain AH187)</name>
    <dbReference type="NCBI Taxonomy" id="405534"/>
    <lineage>
        <taxon>Bacteria</taxon>
        <taxon>Bacillati</taxon>
        <taxon>Bacillota</taxon>
        <taxon>Bacilli</taxon>
        <taxon>Bacillales</taxon>
        <taxon>Bacillaceae</taxon>
        <taxon>Bacillus</taxon>
        <taxon>Bacillus cereus group</taxon>
    </lineage>
</organism>
<protein>
    <recommendedName>
        <fullName evidence="1">Malonate-semialdehyde dehydrogenase</fullName>
        <shortName evidence="1">MSA dehydrogenase</shortName>
        <ecNumber evidence="1">1.2.1.27</ecNumber>
    </recommendedName>
    <alternativeName>
        <fullName evidence="1">Methylmalonate-semialdehyde dehydrogenase</fullName>
        <shortName evidence="1">MMSA dehydrogenase</shortName>
        <shortName evidence="1">MSDH</shortName>
    </alternativeName>
</protein>
<reference key="1">
    <citation type="submission" date="2008-10" db="EMBL/GenBank/DDBJ databases">
        <title>Genome sequence of Bacillus cereus AH187.</title>
        <authorList>
            <person name="Dodson R.J."/>
            <person name="Durkin A.S."/>
            <person name="Rosovitz M.J."/>
            <person name="Rasko D.A."/>
            <person name="Kolsto A.B."/>
            <person name="Okstad O.A."/>
            <person name="Ravel J."/>
            <person name="Sutton G."/>
        </authorList>
    </citation>
    <scope>NUCLEOTIDE SEQUENCE [LARGE SCALE GENOMIC DNA]</scope>
    <source>
        <strain>AH187</strain>
    </source>
</reference>
<evidence type="ECO:0000255" key="1">
    <source>
        <dbReference type="HAMAP-Rule" id="MF_01670"/>
    </source>
</evidence>
<sequence length="486" mass="52978">MITTEIKRVKNHINGEWVESTGTEVEAVPNPATGKIIAYVPLSPKEDVEKAVEAAKAAYETWSKVPVPNRSRQLYKYLQLLQENKEELAKIITLENGKTLTDATGEVQRGIEAVELATSTPNLMMGQALPNIASGIDGSIWRYPIGVVAGITPFNFPMMIPLWMFPLAIACGNTFVLKTSERTPLLAERLVELFYEAGFPKGVLNLVQGGKDVVNSILENKDIQAVSFVGSEPVARYVYETGTKHGKRVQALAGAKNHAIVMPDCNLEKTVQGVIGSAFASSGERCMACSVVAVVDEIADEFIDVLVAETKKLKVGDGFHEDNYVGPLIRESHKERVLGYINSGVADGATLLVDGRKIKEEVGEGYFVGATIFDGVNQEMKIWQDEIFAPVLSIVRVKDLEEGIKLTNQSKFANGAVIYTSSGKHAQTFRDNIDAGMIGVNVNVPAPMAFFAFAGNKASFFGDLGTNGTDGVQFYTRKKVVTERWF</sequence>